<accession>Q0SXK0</accession>
<sequence length="503" mass="54880">MEFSVKSGSPEKQRSACIVVGVFEPRRLSPIAEQLDKISDGYISALLRRGELEGKPGQTLLLHHVPNVLSERILLIGCGKERELDERQYKQVIQKTINTLNDTGSMEAVCFLTELHVKGRNNYWKVRQAVETAKETLYSFDQLKTNKSEPRRPLRKMVFNVPTRRELTSGERAIQHGLAIAAGIKAAKDLGNMPPNICNAAYLASQARQLADSYSKNVITRVIGEQQMKELGMHSYLAVGQGSQNESLMSVIEYKGNASEDARPIVLVGKGLTFDSGGISIKPSEGMDEMKYDMCGAAAVYGVMRMVAELQLPINVIGVLAGCENMPGGRAYRPGDVLTTMSGQTVEVLNTDAEGRLVLCDVLTYVERFEPEAVIDVATLTGACVIALGHHITGLMANHNPLAHELIAASEQSGDRAWRLPLGDEYQEQLESNFADMANIGGRPGGAITAGCFLSRFTRKYNWAHLDIAGTAWRSGKAKGATGRPVALLAQFLLNRAGFNGEE</sequence>
<keyword id="KW-0031">Aminopeptidase</keyword>
<keyword id="KW-0963">Cytoplasm</keyword>
<keyword id="KW-0378">Hydrolase</keyword>
<keyword id="KW-0464">Manganese</keyword>
<keyword id="KW-0479">Metal-binding</keyword>
<keyword id="KW-0645">Protease</keyword>
<organism>
    <name type="scientific">Shigella flexneri serotype 5b (strain 8401)</name>
    <dbReference type="NCBI Taxonomy" id="373384"/>
    <lineage>
        <taxon>Bacteria</taxon>
        <taxon>Pseudomonadati</taxon>
        <taxon>Pseudomonadota</taxon>
        <taxon>Gammaproteobacteria</taxon>
        <taxon>Enterobacterales</taxon>
        <taxon>Enterobacteriaceae</taxon>
        <taxon>Shigella</taxon>
    </lineage>
</organism>
<name>AMPA_SHIF8</name>
<evidence type="ECO:0000255" key="1">
    <source>
        <dbReference type="HAMAP-Rule" id="MF_00181"/>
    </source>
</evidence>
<dbReference type="EC" id="3.4.11.1" evidence="1"/>
<dbReference type="EC" id="3.4.11.10" evidence="1"/>
<dbReference type="EMBL" id="CP000266">
    <property type="protein sequence ID" value="ABF06215.1"/>
    <property type="molecule type" value="Genomic_DNA"/>
</dbReference>
<dbReference type="RefSeq" id="WP_000397144.1">
    <property type="nucleotide sequence ID" value="NC_008258.1"/>
</dbReference>
<dbReference type="SMR" id="Q0SXK0"/>
<dbReference type="MEROPS" id="M17.003"/>
<dbReference type="GeneID" id="93777558"/>
<dbReference type="KEGG" id="sfv:SFV_4233"/>
<dbReference type="HOGENOM" id="CLU_013734_2_2_6"/>
<dbReference type="Proteomes" id="UP000000659">
    <property type="component" value="Chromosome"/>
</dbReference>
<dbReference type="GO" id="GO:0005737">
    <property type="term" value="C:cytoplasm"/>
    <property type="evidence" value="ECO:0007669"/>
    <property type="project" value="UniProtKB-SubCell"/>
</dbReference>
<dbReference type="GO" id="GO:0030145">
    <property type="term" value="F:manganese ion binding"/>
    <property type="evidence" value="ECO:0007669"/>
    <property type="project" value="UniProtKB-UniRule"/>
</dbReference>
<dbReference type="GO" id="GO:0070006">
    <property type="term" value="F:metalloaminopeptidase activity"/>
    <property type="evidence" value="ECO:0007669"/>
    <property type="project" value="InterPro"/>
</dbReference>
<dbReference type="GO" id="GO:0006508">
    <property type="term" value="P:proteolysis"/>
    <property type="evidence" value="ECO:0007669"/>
    <property type="project" value="UniProtKB-KW"/>
</dbReference>
<dbReference type="CDD" id="cd00433">
    <property type="entry name" value="Peptidase_M17"/>
    <property type="match status" value="1"/>
</dbReference>
<dbReference type="FunFam" id="3.40.220.10:FF:000001">
    <property type="entry name" value="Probable cytosol aminopeptidase"/>
    <property type="match status" value="1"/>
</dbReference>
<dbReference type="FunFam" id="3.40.630.10:FF:000004">
    <property type="entry name" value="Probable cytosol aminopeptidase"/>
    <property type="match status" value="1"/>
</dbReference>
<dbReference type="Gene3D" id="3.40.220.10">
    <property type="entry name" value="Leucine Aminopeptidase, subunit E, domain 1"/>
    <property type="match status" value="1"/>
</dbReference>
<dbReference type="Gene3D" id="3.40.630.10">
    <property type="entry name" value="Zn peptidases"/>
    <property type="match status" value="1"/>
</dbReference>
<dbReference type="HAMAP" id="MF_00181">
    <property type="entry name" value="Cytosol_peptidase_M17"/>
    <property type="match status" value="1"/>
</dbReference>
<dbReference type="InterPro" id="IPR011356">
    <property type="entry name" value="Leucine_aapep/pepB"/>
</dbReference>
<dbReference type="InterPro" id="IPR043472">
    <property type="entry name" value="Macro_dom-like"/>
</dbReference>
<dbReference type="InterPro" id="IPR000819">
    <property type="entry name" value="Peptidase_M17_C"/>
</dbReference>
<dbReference type="InterPro" id="IPR023042">
    <property type="entry name" value="Peptidase_M17_leu_NH2_pept"/>
</dbReference>
<dbReference type="InterPro" id="IPR008283">
    <property type="entry name" value="Peptidase_M17_N"/>
</dbReference>
<dbReference type="NCBIfam" id="NF002072">
    <property type="entry name" value="PRK00913.1-1"/>
    <property type="match status" value="1"/>
</dbReference>
<dbReference type="NCBIfam" id="NF002073">
    <property type="entry name" value="PRK00913.1-2"/>
    <property type="match status" value="1"/>
</dbReference>
<dbReference type="NCBIfam" id="NF002074">
    <property type="entry name" value="PRK00913.1-4"/>
    <property type="match status" value="1"/>
</dbReference>
<dbReference type="PANTHER" id="PTHR11963:SF23">
    <property type="entry name" value="CYTOSOL AMINOPEPTIDASE"/>
    <property type="match status" value="1"/>
</dbReference>
<dbReference type="PANTHER" id="PTHR11963">
    <property type="entry name" value="LEUCINE AMINOPEPTIDASE-RELATED"/>
    <property type="match status" value="1"/>
</dbReference>
<dbReference type="Pfam" id="PF00883">
    <property type="entry name" value="Peptidase_M17"/>
    <property type="match status" value="1"/>
</dbReference>
<dbReference type="Pfam" id="PF02789">
    <property type="entry name" value="Peptidase_M17_N"/>
    <property type="match status" value="1"/>
</dbReference>
<dbReference type="PRINTS" id="PR00481">
    <property type="entry name" value="LAMNOPPTDASE"/>
</dbReference>
<dbReference type="SUPFAM" id="SSF52949">
    <property type="entry name" value="Macro domain-like"/>
    <property type="match status" value="1"/>
</dbReference>
<dbReference type="SUPFAM" id="SSF53187">
    <property type="entry name" value="Zn-dependent exopeptidases"/>
    <property type="match status" value="1"/>
</dbReference>
<dbReference type="PROSITE" id="PS00631">
    <property type="entry name" value="CYTOSOL_AP"/>
    <property type="match status" value="1"/>
</dbReference>
<reference key="1">
    <citation type="journal article" date="2006" name="BMC Genomics">
        <title>Complete genome sequence of Shigella flexneri 5b and comparison with Shigella flexneri 2a.</title>
        <authorList>
            <person name="Nie H."/>
            <person name="Yang F."/>
            <person name="Zhang X."/>
            <person name="Yang J."/>
            <person name="Chen L."/>
            <person name="Wang J."/>
            <person name="Xiong Z."/>
            <person name="Peng J."/>
            <person name="Sun L."/>
            <person name="Dong J."/>
            <person name="Xue Y."/>
            <person name="Xu X."/>
            <person name="Chen S."/>
            <person name="Yao Z."/>
            <person name="Shen Y."/>
            <person name="Jin Q."/>
        </authorList>
    </citation>
    <scope>NUCLEOTIDE SEQUENCE [LARGE SCALE GENOMIC DNA]</scope>
    <source>
        <strain>8401</strain>
    </source>
</reference>
<proteinExistence type="inferred from homology"/>
<feature type="chain" id="PRO_1000019982" description="Probable cytosol aminopeptidase">
    <location>
        <begin position="1"/>
        <end position="503"/>
    </location>
</feature>
<feature type="active site" evidence="1">
    <location>
        <position position="282"/>
    </location>
</feature>
<feature type="active site" evidence="1">
    <location>
        <position position="356"/>
    </location>
</feature>
<feature type="binding site" evidence="1">
    <location>
        <position position="270"/>
    </location>
    <ligand>
        <name>Mn(2+)</name>
        <dbReference type="ChEBI" id="CHEBI:29035"/>
        <label>2</label>
    </ligand>
</feature>
<feature type="binding site" evidence="1">
    <location>
        <position position="275"/>
    </location>
    <ligand>
        <name>Mn(2+)</name>
        <dbReference type="ChEBI" id="CHEBI:29035"/>
        <label>1</label>
    </ligand>
</feature>
<feature type="binding site" evidence="1">
    <location>
        <position position="275"/>
    </location>
    <ligand>
        <name>Mn(2+)</name>
        <dbReference type="ChEBI" id="CHEBI:29035"/>
        <label>2</label>
    </ligand>
</feature>
<feature type="binding site" evidence="1">
    <location>
        <position position="293"/>
    </location>
    <ligand>
        <name>Mn(2+)</name>
        <dbReference type="ChEBI" id="CHEBI:29035"/>
        <label>2</label>
    </ligand>
</feature>
<feature type="binding site" evidence="1">
    <location>
        <position position="352"/>
    </location>
    <ligand>
        <name>Mn(2+)</name>
        <dbReference type="ChEBI" id="CHEBI:29035"/>
        <label>1</label>
    </ligand>
</feature>
<feature type="binding site" evidence="1">
    <location>
        <position position="354"/>
    </location>
    <ligand>
        <name>Mn(2+)</name>
        <dbReference type="ChEBI" id="CHEBI:29035"/>
        <label>1</label>
    </ligand>
</feature>
<feature type="binding site" evidence="1">
    <location>
        <position position="354"/>
    </location>
    <ligand>
        <name>Mn(2+)</name>
        <dbReference type="ChEBI" id="CHEBI:29035"/>
        <label>2</label>
    </ligand>
</feature>
<comment type="function">
    <text evidence="1">Presumably involved in the processing and regular turnover of intracellular proteins. Catalyzes the removal of unsubstituted N-terminal amino acids from various peptides.</text>
</comment>
<comment type="catalytic activity">
    <reaction evidence="1">
        <text>Release of an N-terminal amino acid, Xaa-|-Yaa-, in which Xaa is preferably Leu, but may be other amino acids including Pro although not Arg or Lys, and Yaa may be Pro. Amino acid amides and methyl esters are also readily hydrolyzed, but rates on arylamides are exceedingly low.</text>
        <dbReference type="EC" id="3.4.11.1"/>
    </reaction>
</comment>
<comment type="catalytic activity">
    <reaction evidence="1">
        <text>Release of an N-terminal amino acid, preferentially leucine, but not glutamic or aspartic acids.</text>
        <dbReference type="EC" id="3.4.11.10"/>
    </reaction>
</comment>
<comment type="cofactor">
    <cofactor evidence="1">
        <name>Mn(2+)</name>
        <dbReference type="ChEBI" id="CHEBI:29035"/>
    </cofactor>
    <text evidence="1">Binds 2 manganese ions per subunit.</text>
</comment>
<comment type="subcellular location">
    <subcellularLocation>
        <location evidence="1">Cytoplasm</location>
    </subcellularLocation>
</comment>
<comment type="similarity">
    <text evidence="1">Belongs to the peptidase M17 family.</text>
</comment>
<protein>
    <recommendedName>
        <fullName evidence="1">Probable cytosol aminopeptidase</fullName>
        <ecNumber evidence="1">3.4.11.1</ecNumber>
    </recommendedName>
    <alternativeName>
        <fullName evidence="1">Leucine aminopeptidase</fullName>
        <shortName evidence="1">LAP</shortName>
        <ecNumber evidence="1">3.4.11.10</ecNumber>
    </alternativeName>
    <alternativeName>
        <fullName evidence="1">Leucyl aminopeptidase</fullName>
    </alternativeName>
</protein>
<gene>
    <name evidence="1" type="primary">pepA</name>
    <name type="ordered locus">SFV_4233</name>
</gene>